<organism>
    <name type="scientific">Phascolopsis gouldii</name>
    <name type="common">Peanut worm</name>
    <name type="synonym">Golfingia gouldii</name>
    <dbReference type="NCBI Taxonomy" id="6442"/>
    <lineage>
        <taxon>Eukaryota</taxon>
        <taxon>Metazoa</taxon>
        <taxon>Spiralia</taxon>
        <taxon>Lophotrochozoa</taxon>
        <taxon>Annelida</taxon>
        <taxon>Sipuncula</taxon>
        <taxon>Sipunculidea</taxon>
        <taxon>Golfingiida</taxon>
        <taxon>Sipunculidae</taxon>
        <taxon>Phascolopsis</taxon>
    </lineage>
</organism>
<sequence length="114" mass="13605">MGFPIPDPYVWDPSFRTFYSIIDDEHKTLFNGIFHLAIDDNADNLGELRRCTGKHFLNEQVLMQASQYQFYDEHKKEHETFIHALDNWKGDVKWAKSWLVNHIKTIDFKYKGKI</sequence>
<dbReference type="EMBL" id="AF220529">
    <property type="protein sequence ID" value="AAF25482.1"/>
    <property type="molecule type" value="mRNA"/>
</dbReference>
<dbReference type="PIR" id="A90553">
    <property type="entry name" value="HRGG"/>
</dbReference>
<dbReference type="PDB" id="1HRB">
    <property type="method" value="X-ray"/>
    <property type="resolution" value="5.50 A"/>
    <property type="chains" value="A/B=2-114"/>
</dbReference>
<dbReference type="PDB" id="1I4Y">
    <property type="method" value="X-ray"/>
    <property type="resolution" value="1.80 A"/>
    <property type="chains" value="A/B/C/D/E/F/G/H=1-114"/>
</dbReference>
<dbReference type="PDB" id="1I4Z">
    <property type="method" value="X-ray"/>
    <property type="resolution" value="2.10 A"/>
    <property type="chains" value="A/B/C/D/E/F/G/H=1-114"/>
</dbReference>
<dbReference type="PDBsum" id="1HRB"/>
<dbReference type="PDBsum" id="1I4Y"/>
<dbReference type="PDBsum" id="1I4Z"/>
<dbReference type="SMR" id="P02244"/>
<dbReference type="EvolutionaryTrace" id="P02244"/>
<dbReference type="GO" id="GO:0005506">
    <property type="term" value="F:iron ion binding"/>
    <property type="evidence" value="ECO:0007669"/>
    <property type="project" value="InterPro"/>
</dbReference>
<dbReference type="GO" id="GO:0005344">
    <property type="term" value="F:oxygen carrier activity"/>
    <property type="evidence" value="ECO:0007669"/>
    <property type="project" value="UniProtKB-KW"/>
</dbReference>
<dbReference type="CDD" id="cd00522">
    <property type="entry name" value="Hemerythrin-like"/>
    <property type="match status" value="1"/>
</dbReference>
<dbReference type="Gene3D" id="1.20.120.50">
    <property type="entry name" value="Hemerythrin-like"/>
    <property type="match status" value="1"/>
</dbReference>
<dbReference type="InterPro" id="IPR002063">
    <property type="entry name" value="Haemerythrin"/>
</dbReference>
<dbReference type="InterPro" id="IPR016131">
    <property type="entry name" value="Haemerythrin_Fe_BS"/>
</dbReference>
<dbReference type="InterPro" id="IPR050669">
    <property type="entry name" value="Hemerythrin"/>
</dbReference>
<dbReference type="InterPro" id="IPR012312">
    <property type="entry name" value="Hemerythrin-like"/>
</dbReference>
<dbReference type="InterPro" id="IPR035938">
    <property type="entry name" value="Hemerythrin-like_sf"/>
</dbReference>
<dbReference type="InterPro" id="IPR012827">
    <property type="entry name" value="Hemerythrin_metal-bd"/>
</dbReference>
<dbReference type="NCBIfam" id="TIGR02481">
    <property type="entry name" value="hemeryth_dom"/>
    <property type="match status" value="1"/>
</dbReference>
<dbReference type="NCBIfam" id="TIGR00058">
    <property type="entry name" value="Hemerythrin"/>
    <property type="match status" value="1"/>
</dbReference>
<dbReference type="PANTHER" id="PTHR37164">
    <property type="entry name" value="BACTERIOHEMERYTHRIN"/>
    <property type="match status" value="1"/>
</dbReference>
<dbReference type="PANTHER" id="PTHR37164:SF1">
    <property type="entry name" value="BACTERIOHEMERYTHRIN"/>
    <property type="match status" value="1"/>
</dbReference>
<dbReference type="Pfam" id="PF01814">
    <property type="entry name" value="Hemerythrin"/>
    <property type="match status" value="1"/>
</dbReference>
<dbReference type="PIRSF" id="PIRSF002033">
    <property type="entry name" value="Hemerythrin"/>
    <property type="match status" value="1"/>
</dbReference>
<dbReference type="PRINTS" id="PR00186">
    <property type="entry name" value="HEMERYTHRIN"/>
</dbReference>
<dbReference type="SUPFAM" id="SSF47188">
    <property type="entry name" value="Hemerythrin-like"/>
    <property type="match status" value="1"/>
</dbReference>
<dbReference type="PROSITE" id="PS00550">
    <property type="entry name" value="HEMERYTHRINS"/>
    <property type="match status" value="1"/>
</dbReference>
<name>HEMT_PHAGO</name>
<evidence type="ECO:0000269" key="1">
    <source>
    </source>
</evidence>
<evidence type="ECO:0000269" key="2">
    <source>
    </source>
</evidence>
<evidence type="ECO:0000269" key="3">
    <source>
    </source>
</evidence>
<evidence type="ECO:0000305" key="4"/>
<evidence type="ECO:0007744" key="5">
    <source>
        <dbReference type="PDB" id="1I4Y"/>
    </source>
</evidence>
<evidence type="ECO:0007744" key="6">
    <source>
        <dbReference type="PDB" id="1I4Z"/>
    </source>
</evidence>
<evidence type="ECO:0007829" key="7">
    <source>
        <dbReference type="PDB" id="1I4Y"/>
    </source>
</evidence>
<accession>P02244</accession>
<accession>Q9U3V2</accession>
<reference key="1">
    <citation type="journal article" date="2000" name="J. Biol. Chem.">
        <title>A leucine residue 'Gates' solvent but not O2 access to the binding pocket of Phascolopsis gouldii hemerythrin.</title>
        <authorList>
            <person name="Farmer C.S."/>
            <person name="Kurtz D.M. Jr."/>
            <person name="Phillips R.S."/>
            <person name="Ai J."/>
            <person name="Sanders-Loehr J."/>
        </authorList>
    </citation>
    <scope>NUCLEOTIDE SEQUENCE [MRNA]</scope>
    <scope>MUTAGENESIS OF LEU-99</scope>
</reference>
<reference key="2">
    <citation type="journal article" date="1968" name="Biochemistry">
        <title>The primary structure of Golfingia gouldii hemerythrin. Oder of peptides in fragments produced by tryptic digestion of succinylated hemerythrin. Complete amino acid sequence.</title>
        <authorList>
            <person name="Klippenstein G.L."/>
            <person name="Holleman J.W."/>
            <person name="Klotz I.M."/>
        </authorList>
    </citation>
    <scope>PROTEIN SEQUENCE OF 2-114</scope>
</reference>
<reference key="3">
    <citation type="journal article" date="1971" name="FEBS Lett.">
        <title>The amino-terminal sequence of Dendrostomum pyroides hemerythrin.</title>
        <authorList>
            <person name="Ferrell R.E."/>
            <person name="Kitto G.B."/>
        </authorList>
    </citation>
    <scope>SEQUENCE REVISION TO 11-12</scope>
</reference>
<reference key="4">
    <citation type="journal article" date="1978" name="Biochem. Biophys. Res. Commun.">
        <title>New evidence for glutamic acid as an iron ligand in hemerythrin.</title>
        <authorList>
            <person name="Gormley P.M."/>
            <person name="Loehr J.S."/>
            <person name="Brimhall B."/>
            <person name="Hermodson M.A."/>
        </authorList>
    </citation>
    <scope>SEQUENCE REVISION TO 59-60</scope>
</reference>
<reference key="5">
    <citation type="journal article" date="1972" name="Biochemistry">
        <title>Molecular variants of Golfingia gouldii hemerythrin. The primary structure of the variants arising from five amino acid interchanges.</title>
        <authorList>
            <person name="Klippenstein G.L."/>
        </authorList>
    </citation>
    <scope>VARIANTS</scope>
</reference>
<reference key="6">
    <citation type="journal article" date="1975" name="Biochem. Biophys. Res. Commun.">
        <title>Atomic models for the polypeptide backbones of myohemerythrin and hemerythrin.</title>
        <authorList>
            <person name="Hendrickson W.A."/>
            <person name="Ward K.B."/>
        </authorList>
    </citation>
    <scope>X-RAY CRYSTALLOGRAPHY (5.50 ANGSTROMS) OF 2-114</scope>
</reference>
<reference key="7">
    <citation type="journal article" date="2001" name="J. Biol. Inorg. Chem.">
        <title>The crystal structures of Phascolopsis gouldii wild type and L98Y methemerythrins: structural and functional alterations of the O2 binding pocket.</title>
        <authorList>
            <person name="Farmer C.S."/>
            <person name="Kurtz D.M. Jr."/>
            <person name="Liu Z.J."/>
            <person name="Wang B.C."/>
            <person name="Rose J."/>
            <person name="Ai J."/>
            <person name="Sanders-Loehr J."/>
        </authorList>
    </citation>
    <scope>X-RAY CRYSTALLOGRAPHY (1.80 ANGSTROMS) IN COMPLEX WITH IRON</scope>
    <scope>SUBUNIT</scope>
</reference>
<keyword id="KW-0002">3D-structure</keyword>
<keyword id="KW-0903">Direct protein sequencing</keyword>
<keyword id="KW-0408">Iron</keyword>
<keyword id="KW-0479">Metal-binding</keyword>
<keyword id="KW-0561">Oxygen transport</keyword>
<keyword id="KW-0813">Transport</keyword>
<feature type="initiator methionine" description="Removed" evidence="3">
    <location>
        <position position="1"/>
    </location>
</feature>
<feature type="chain" id="PRO_0000191837" description="Hemerythrin">
    <location>
        <begin position="2"/>
        <end position="114"/>
    </location>
</feature>
<feature type="binding site" evidence="2 5 6">
    <location>
        <position position="26"/>
    </location>
    <ligand>
        <name>Fe cation</name>
        <dbReference type="ChEBI" id="CHEBI:24875"/>
        <label>1</label>
    </ligand>
</feature>
<feature type="binding site" evidence="2 5 6">
    <location>
        <position position="55"/>
    </location>
    <ligand>
        <name>Fe cation</name>
        <dbReference type="ChEBI" id="CHEBI:24875"/>
        <label>1</label>
    </ligand>
</feature>
<feature type="binding site" evidence="2 5 6">
    <location>
        <position position="59"/>
    </location>
    <ligand>
        <name>Fe cation</name>
        <dbReference type="ChEBI" id="CHEBI:24875"/>
        <label>1</label>
    </ligand>
</feature>
<feature type="binding site" evidence="2 5 6">
    <location>
        <position position="59"/>
    </location>
    <ligand>
        <name>Fe cation</name>
        <dbReference type="ChEBI" id="CHEBI:24875"/>
        <label>2</label>
    </ligand>
</feature>
<feature type="binding site" evidence="2 5 6">
    <location>
        <position position="74"/>
    </location>
    <ligand>
        <name>Fe cation</name>
        <dbReference type="ChEBI" id="CHEBI:24875"/>
        <label>2</label>
    </ligand>
</feature>
<feature type="binding site" evidence="2 5 6">
    <location>
        <position position="78"/>
    </location>
    <ligand>
        <name>Fe cation</name>
        <dbReference type="ChEBI" id="CHEBI:24875"/>
        <label>2</label>
    </ligand>
</feature>
<feature type="binding site" evidence="2 5 6">
    <location>
        <position position="102"/>
    </location>
    <ligand>
        <name>Fe cation</name>
        <dbReference type="ChEBI" id="CHEBI:24875"/>
        <label>2</label>
    </ligand>
</feature>
<feature type="binding site" evidence="2 5 6">
    <location>
        <position position="107"/>
    </location>
    <ligand>
        <name>Fe cation</name>
        <dbReference type="ChEBI" id="CHEBI:24875"/>
        <label>1</label>
    </ligand>
</feature>
<feature type="binding site" evidence="2 5 6">
    <location>
        <position position="107"/>
    </location>
    <ligand>
        <name>Fe cation</name>
        <dbReference type="ChEBI" id="CHEBI:24875"/>
        <label>2</label>
    </ligand>
</feature>
<feature type="sequence variant" description="In minor component.">
    <original>Q</original>
    <variation>E</variation>
    <location>
        <position position="64"/>
    </location>
</feature>
<feature type="sequence variant" description="In minor component.">
    <original>E</original>
    <variation>D</variation>
    <location>
        <position position="79"/>
    </location>
</feature>
<feature type="sequence variant">
    <original>T</original>
    <variation>G</variation>
    <location>
        <position position="80"/>
    </location>
</feature>
<feature type="sequence variant" description="In minor component.">
    <original>H</original>
    <variation>N</variation>
    <location>
        <position position="83"/>
    </location>
</feature>
<feature type="sequence variant" description="In minor and major variants.">
    <original>S</original>
    <variation>A</variation>
    <location>
        <position position="97"/>
    </location>
</feature>
<feature type="mutagenesis site" description="Increased auto-oxidation rate (when X different from Tyr)." evidence="1">
    <original>L</original>
    <variation>X</variation>
    <location>
        <position position="99"/>
    </location>
</feature>
<feature type="mutagenesis site" description="Decreased auto-oxidation rate." evidence="1">
    <original>L</original>
    <variation>Y</variation>
    <location>
        <position position="99"/>
    </location>
</feature>
<feature type="helix" evidence="7">
    <location>
        <begin position="13"/>
        <end position="15"/>
    </location>
</feature>
<feature type="helix" evidence="7">
    <location>
        <begin position="20"/>
        <end position="38"/>
    </location>
</feature>
<feature type="helix" evidence="7">
    <location>
        <begin position="42"/>
        <end position="65"/>
    </location>
</feature>
<feature type="helix" evidence="7">
    <location>
        <begin position="71"/>
        <end position="86"/>
    </location>
</feature>
<feature type="helix" evidence="7">
    <location>
        <begin position="92"/>
        <end position="105"/>
    </location>
</feature>
<feature type="helix" evidence="7">
    <location>
        <begin position="107"/>
        <end position="110"/>
    </location>
</feature>
<feature type="turn" evidence="7">
    <location>
        <begin position="111"/>
        <end position="113"/>
    </location>
</feature>
<comment type="function">
    <text>Hemerythrin is a respiratory protein in blood cells of certain marine worms. The oxygen-binding site in each chain contains two iron atoms.</text>
</comment>
<comment type="subunit">
    <text evidence="2">Homooctamer.</text>
</comment>
<comment type="miscellaneous">
    <text>The sequence from one of the four major component variants is shown.</text>
</comment>
<comment type="similarity">
    <text evidence="4">Belongs to the hemerythrin family.</text>
</comment>
<protein>
    <recommendedName>
        <fullName>Hemerythrin</fullName>
    </recommendedName>
</protein>
<proteinExistence type="evidence at protein level"/>